<feature type="chain" id="PRO_0000372735" description="UPF0741 protein BH3821">
    <location>
        <begin position="1"/>
        <end position="74"/>
    </location>
</feature>
<dbReference type="EMBL" id="BA000004">
    <property type="protein sequence ID" value="BAB07540.1"/>
    <property type="molecule type" value="Genomic_DNA"/>
</dbReference>
<dbReference type="PIR" id="E84127">
    <property type="entry name" value="E84127"/>
</dbReference>
<dbReference type="RefSeq" id="WP_010899946.1">
    <property type="nucleotide sequence ID" value="NC_002570.2"/>
</dbReference>
<dbReference type="SMR" id="Q9K6A8"/>
<dbReference type="STRING" id="272558.gene:10729734"/>
<dbReference type="GeneID" id="87599367"/>
<dbReference type="KEGG" id="bha:BH3821"/>
<dbReference type="eggNOG" id="COG4844">
    <property type="taxonomic scope" value="Bacteria"/>
</dbReference>
<dbReference type="HOGENOM" id="CLU_163820_1_0_9"/>
<dbReference type="OrthoDB" id="1645211at2"/>
<dbReference type="Proteomes" id="UP000001258">
    <property type="component" value="Chromosome"/>
</dbReference>
<dbReference type="HAMAP" id="MF_01863">
    <property type="entry name" value="UPF0741"/>
    <property type="match status" value="1"/>
</dbReference>
<dbReference type="InterPro" id="IPR009910">
    <property type="entry name" value="DUF1450"/>
</dbReference>
<dbReference type="InterPro" id="IPR020880">
    <property type="entry name" value="UPF0741"/>
</dbReference>
<dbReference type="Pfam" id="PF07293">
    <property type="entry name" value="DUF1450"/>
    <property type="match status" value="1"/>
</dbReference>
<evidence type="ECO:0000255" key="1">
    <source>
        <dbReference type="HAMAP-Rule" id="MF_01863"/>
    </source>
</evidence>
<accession>Q9K6A8</accession>
<gene>
    <name type="ordered locus">BH3821</name>
</gene>
<sequence length="74" mass="8466">MANEFRICDECQATNIKTLIPKLKKLDPNATIDIRCQSYCGPGRKKSFTFVNNRPVAAPDEDQLIEKIKKKLKK</sequence>
<reference key="1">
    <citation type="journal article" date="2000" name="Nucleic Acids Res.">
        <title>Complete genome sequence of the alkaliphilic bacterium Bacillus halodurans and genomic sequence comparison with Bacillus subtilis.</title>
        <authorList>
            <person name="Takami H."/>
            <person name="Nakasone K."/>
            <person name="Takaki Y."/>
            <person name="Maeno G."/>
            <person name="Sasaki R."/>
            <person name="Masui N."/>
            <person name="Fuji F."/>
            <person name="Hirama C."/>
            <person name="Nakamura Y."/>
            <person name="Ogasawara N."/>
            <person name="Kuhara S."/>
            <person name="Horikoshi K."/>
        </authorList>
    </citation>
    <scope>NUCLEOTIDE SEQUENCE [LARGE SCALE GENOMIC DNA]</scope>
    <source>
        <strain>ATCC BAA-125 / DSM 18197 / FERM 7344 / JCM 9153 / C-125</strain>
    </source>
</reference>
<comment type="similarity">
    <text evidence="1">Belongs to the UPF0741 family.</text>
</comment>
<proteinExistence type="inferred from homology"/>
<protein>
    <recommendedName>
        <fullName evidence="1">UPF0741 protein BH3821</fullName>
    </recommendedName>
</protein>
<name>Y3821_HALH5</name>
<keyword id="KW-1185">Reference proteome</keyword>
<organism>
    <name type="scientific">Halalkalibacterium halodurans (strain ATCC BAA-125 / DSM 18197 / FERM 7344 / JCM 9153 / C-125)</name>
    <name type="common">Bacillus halodurans</name>
    <dbReference type="NCBI Taxonomy" id="272558"/>
    <lineage>
        <taxon>Bacteria</taxon>
        <taxon>Bacillati</taxon>
        <taxon>Bacillota</taxon>
        <taxon>Bacilli</taxon>
        <taxon>Bacillales</taxon>
        <taxon>Bacillaceae</taxon>
        <taxon>Halalkalibacterium (ex Joshi et al. 2022)</taxon>
    </lineage>
</organism>